<comment type="function">
    <text evidence="1">The RuvA-RuvB-RuvC complex processes Holliday junction (HJ) DNA during genetic recombination and DNA repair, while the RuvA-RuvB complex plays an important role in the rescue of blocked DNA replication forks via replication fork reversal (RFR). RuvA specifically binds to HJ cruciform DNA, conferring on it an open structure. The RuvB hexamer acts as an ATP-dependent pump, pulling dsDNA into and through the RuvAB complex. HJ branch migration allows RuvC to scan DNA until it finds its consensus sequence, where it cleaves and resolves the cruciform DNA.</text>
</comment>
<comment type="subunit">
    <text evidence="1">Homotetramer. Forms an RuvA(8)-RuvB(12)-Holliday junction (HJ) complex. HJ DNA is sandwiched between 2 RuvA tetramers; dsDNA enters through RuvA and exits via RuvB. An RuvB hexamer assembles on each DNA strand where it exits the tetramer. Each RuvB hexamer is contacted by two RuvA subunits (via domain III) on 2 adjacent RuvB subunits; this complex drives branch migration. In the full resolvosome a probable DNA-RuvA(4)-RuvB(12)-RuvC(2) complex forms which resolves the HJ.</text>
</comment>
<comment type="subcellular location">
    <subcellularLocation>
        <location evidence="1">Cytoplasm</location>
    </subcellularLocation>
</comment>
<comment type="domain">
    <text evidence="1">Has three domains with a flexible linker between the domains II and III and assumes an 'L' shape. Domain III is highly mobile and contacts RuvB.</text>
</comment>
<comment type="similarity">
    <text evidence="1">Belongs to the RuvA family.</text>
</comment>
<reference key="1">
    <citation type="journal article" date="2002" name="J. Bacteriol.">
        <title>Genome sequence and analysis of the oral bacterium Fusobacterium nucleatum strain ATCC 25586.</title>
        <authorList>
            <person name="Kapatral V."/>
            <person name="Anderson I."/>
            <person name="Ivanova N."/>
            <person name="Reznik G."/>
            <person name="Los T."/>
            <person name="Lykidis A."/>
            <person name="Bhattacharyya A."/>
            <person name="Bartman A."/>
            <person name="Gardner W."/>
            <person name="Grechkin G."/>
            <person name="Zhu L."/>
            <person name="Vasieva O."/>
            <person name="Chu L."/>
            <person name="Kogan Y."/>
            <person name="Chaga O."/>
            <person name="Goltsman E."/>
            <person name="Bernal A."/>
            <person name="Larsen N."/>
            <person name="D'Souza M."/>
            <person name="Walunas T."/>
            <person name="Pusch G."/>
            <person name="Haselkorn R."/>
            <person name="Fonstein M."/>
            <person name="Kyrpides N.C."/>
            <person name="Overbeek R."/>
        </authorList>
    </citation>
    <scope>NUCLEOTIDE SEQUENCE [LARGE SCALE GENOMIC DNA]</scope>
    <source>
        <strain>ATCC 25586 / DSM 15643 / BCRC 10681 / CIP 101130 / JCM 8532 / KCTC 2640 / LMG 13131 / VPI 4355</strain>
    </source>
</reference>
<keyword id="KW-0963">Cytoplasm</keyword>
<keyword id="KW-0227">DNA damage</keyword>
<keyword id="KW-0233">DNA recombination</keyword>
<keyword id="KW-0234">DNA repair</keyword>
<keyword id="KW-0238">DNA-binding</keyword>
<keyword id="KW-1185">Reference proteome</keyword>
<sequence length="194" mass="22579">MFEYLYGTVEYKKMDYIAIDINGVGYRVYFPLREYEKIEVGNKYKLYIYNHIKEDTYKLIGFLDERDRKIFELLLKINGIGSSLALAVLSNFSYNKIIEIISKNDYTTLRQVPKLGEKKAQIIILDLKGKLKNLTYTEEETVSMDMLEDLVLALEGLGYNKKEIDKTLEKIDLNKFSSLEDAIKGILKNMRIGD</sequence>
<organism>
    <name type="scientific">Fusobacterium nucleatum subsp. nucleatum (strain ATCC 25586 / DSM 15643 / BCRC 10681 / CIP 101130 / JCM 8532 / KCTC 2640 / LMG 13131 / VPI 4355)</name>
    <dbReference type="NCBI Taxonomy" id="190304"/>
    <lineage>
        <taxon>Bacteria</taxon>
        <taxon>Fusobacteriati</taxon>
        <taxon>Fusobacteriota</taxon>
        <taxon>Fusobacteriia</taxon>
        <taxon>Fusobacteriales</taxon>
        <taxon>Fusobacteriaceae</taxon>
        <taxon>Fusobacterium</taxon>
    </lineage>
</organism>
<name>RUVA_FUSNN</name>
<feature type="chain" id="PRO_0000094633" description="Holliday junction branch migration complex subunit RuvA">
    <location>
        <begin position="1"/>
        <end position="194"/>
    </location>
</feature>
<feature type="region of interest" description="Domain I" evidence="1">
    <location>
        <begin position="1"/>
        <end position="63"/>
    </location>
</feature>
<feature type="region of interest" description="Domain II" evidence="1">
    <location>
        <begin position="64"/>
        <end position="142"/>
    </location>
</feature>
<feature type="region of interest" description="Flexible linker" evidence="1">
    <location>
        <begin position="143"/>
        <end position="147"/>
    </location>
</feature>
<feature type="region of interest" description="Domain III" evidence="1">
    <location>
        <begin position="147"/>
        <end position="194"/>
    </location>
</feature>
<proteinExistence type="inferred from homology"/>
<gene>
    <name evidence="1" type="primary">ruvA</name>
    <name type="ordered locus">FN1104</name>
</gene>
<accession>Q8REJ7</accession>
<protein>
    <recommendedName>
        <fullName evidence="1">Holliday junction branch migration complex subunit RuvA</fullName>
    </recommendedName>
</protein>
<dbReference type="EMBL" id="AE009951">
    <property type="protein sequence ID" value="AAL95300.1"/>
    <property type="molecule type" value="Genomic_DNA"/>
</dbReference>
<dbReference type="RefSeq" id="NP_604001.1">
    <property type="nucleotide sequence ID" value="NC_003454.1"/>
</dbReference>
<dbReference type="RefSeq" id="WP_005902889.1">
    <property type="nucleotide sequence ID" value="NZ_OZ209243.1"/>
</dbReference>
<dbReference type="SMR" id="Q8REJ7"/>
<dbReference type="FunCoup" id="Q8REJ7">
    <property type="interactions" value="287"/>
</dbReference>
<dbReference type="STRING" id="190304.FN1104"/>
<dbReference type="PaxDb" id="190304-FN1104"/>
<dbReference type="EnsemblBacteria" id="AAL95300">
    <property type="protein sequence ID" value="AAL95300"/>
    <property type="gene ID" value="FN1104"/>
</dbReference>
<dbReference type="GeneID" id="79784084"/>
<dbReference type="KEGG" id="fnu:FN1104"/>
<dbReference type="PATRIC" id="fig|190304.8.peg.1669"/>
<dbReference type="eggNOG" id="COG0632">
    <property type="taxonomic scope" value="Bacteria"/>
</dbReference>
<dbReference type="HOGENOM" id="CLU_087936_3_0_0"/>
<dbReference type="InParanoid" id="Q8REJ7"/>
<dbReference type="BioCyc" id="FNUC190304:G1FZS-1684-MONOMER"/>
<dbReference type="Proteomes" id="UP000002521">
    <property type="component" value="Chromosome"/>
</dbReference>
<dbReference type="GO" id="GO:0005737">
    <property type="term" value="C:cytoplasm"/>
    <property type="evidence" value="ECO:0007669"/>
    <property type="project" value="UniProtKB-SubCell"/>
</dbReference>
<dbReference type="GO" id="GO:0009379">
    <property type="term" value="C:Holliday junction helicase complex"/>
    <property type="evidence" value="ECO:0007669"/>
    <property type="project" value="InterPro"/>
</dbReference>
<dbReference type="GO" id="GO:0048476">
    <property type="term" value="C:Holliday junction resolvase complex"/>
    <property type="evidence" value="ECO:0007669"/>
    <property type="project" value="UniProtKB-UniRule"/>
</dbReference>
<dbReference type="GO" id="GO:0005524">
    <property type="term" value="F:ATP binding"/>
    <property type="evidence" value="ECO:0007669"/>
    <property type="project" value="InterPro"/>
</dbReference>
<dbReference type="GO" id="GO:0000400">
    <property type="term" value="F:four-way junction DNA binding"/>
    <property type="evidence" value="ECO:0007669"/>
    <property type="project" value="UniProtKB-UniRule"/>
</dbReference>
<dbReference type="GO" id="GO:0009378">
    <property type="term" value="F:four-way junction helicase activity"/>
    <property type="evidence" value="ECO:0000318"/>
    <property type="project" value="GO_Central"/>
</dbReference>
<dbReference type="GO" id="GO:0006310">
    <property type="term" value="P:DNA recombination"/>
    <property type="evidence" value="ECO:0007669"/>
    <property type="project" value="UniProtKB-UniRule"/>
</dbReference>
<dbReference type="GO" id="GO:0006281">
    <property type="term" value="P:DNA repair"/>
    <property type="evidence" value="ECO:0007669"/>
    <property type="project" value="UniProtKB-UniRule"/>
</dbReference>
<dbReference type="GO" id="GO:0009432">
    <property type="term" value="P:SOS response"/>
    <property type="evidence" value="ECO:0000318"/>
    <property type="project" value="GO_Central"/>
</dbReference>
<dbReference type="CDD" id="cd14332">
    <property type="entry name" value="UBA_RuvA_C"/>
    <property type="match status" value="1"/>
</dbReference>
<dbReference type="Gene3D" id="1.10.150.20">
    <property type="entry name" value="5' to 3' exonuclease, C-terminal subdomain"/>
    <property type="match status" value="1"/>
</dbReference>
<dbReference type="Gene3D" id="1.10.8.10">
    <property type="entry name" value="DNA helicase RuvA subunit, C-terminal domain"/>
    <property type="match status" value="1"/>
</dbReference>
<dbReference type="Gene3D" id="2.40.50.140">
    <property type="entry name" value="Nucleic acid-binding proteins"/>
    <property type="match status" value="1"/>
</dbReference>
<dbReference type="HAMAP" id="MF_00031">
    <property type="entry name" value="DNA_HJ_migration_RuvA"/>
    <property type="match status" value="1"/>
</dbReference>
<dbReference type="InterPro" id="IPR013849">
    <property type="entry name" value="DNA_helicase_Holl-junc_RuvA_I"/>
</dbReference>
<dbReference type="InterPro" id="IPR012340">
    <property type="entry name" value="NA-bd_OB-fold"/>
</dbReference>
<dbReference type="InterPro" id="IPR000085">
    <property type="entry name" value="RuvA"/>
</dbReference>
<dbReference type="InterPro" id="IPR010994">
    <property type="entry name" value="RuvA_2-like"/>
</dbReference>
<dbReference type="InterPro" id="IPR011114">
    <property type="entry name" value="RuvA_C"/>
</dbReference>
<dbReference type="InterPro" id="IPR036267">
    <property type="entry name" value="RuvA_C_sf"/>
</dbReference>
<dbReference type="NCBIfam" id="TIGR00084">
    <property type="entry name" value="ruvA"/>
    <property type="match status" value="1"/>
</dbReference>
<dbReference type="Pfam" id="PF14520">
    <property type="entry name" value="HHH_5"/>
    <property type="match status" value="1"/>
</dbReference>
<dbReference type="Pfam" id="PF07499">
    <property type="entry name" value="RuvA_C"/>
    <property type="match status" value="1"/>
</dbReference>
<dbReference type="Pfam" id="PF01330">
    <property type="entry name" value="RuvA_N"/>
    <property type="match status" value="1"/>
</dbReference>
<dbReference type="SUPFAM" id="SSF46929">
    <property type="entry name" value="DNA helicase RuvA subunit, C-terminal domain"/>
    <property type="match status" value="1"/>
</dbReference>
<dbReference type="SUPFAM" id="SSF50249">
    <property type="entry name" value="Nucleic acid-binding proteins"/>
    <property type="match status" value="1"/>
</dbReference>
<dbReference type="SUPFAM" id="SSF47781">
    <property type="entry name" value="RuvA domain 2-like"/>
    <property type="match status" value="1"/>
</dbReference>
<evidence type="ECO:0000255" key="1">
    <source>
        <dbReference type="HAMAP-Rule" id="MF_00031"/>
    </source>
</evidence>